<gene>
    <name evidence="1" type="primary">mraY</name>
    <name type="ordered locus">Rmet_3131</name>
</gene>
<dbReference type="EC" id="2.7.8.13" evidence="1"/>
<dbReference type="EMBL" id="CP000352">
    <property type="protein sequence ID" value="ABF10003.1"/>
    <property type="molecule type" value="Genomic_DNA"/>
</dbReference>
<dbReference type="RefSeq" id="WP_008650301.1">
    <property type="nucleotide sequence ID" value="NC_007973.1"/>
</dbReference>
<dbReference type="SMR" id="Q1LIM3"/>
<dbReference type="STRING" id="266264.Rmet_3131"/>
<dbReference type="GeneID" id="60820493"/>
<dbReference type="KEGG" id="rme:Rmet_3131"/>
<dbReference type="eggNOG" id="COG0472">
    <property type="taxonomic scope" value="Bacteria"/>
</dbReference>
<dbReference type="HOGENOM" id="CLU_023982_0_0_4"/>
<dbReference type="UniPathway" id="UPA00219"/>
<dbReference type="Proteomes" id="UP000002429">
    <property type="component" value="Chromosome"/>
</dbReference>
<dbReference type="GO" id="GO:0005886">
    <property type="term" value="C:plasma membrane"/>
    <property type="evidence" value="ECO:0007669"/>
    <property type="project" value="UniProtKB-SubCell"/>
</dbReference>
<dbReference type="GO" id="GO:0046872">
    <property type="term" value="F:metal ion binding"/>
    <property type="evidence" value="ECO:0007669"/>
    <property type="project" value="UniProtKB-KW"/>
</dbReference>
<dbReference type="GO" id="GO:0008963">
    <property type="term" value="F:phospho-N-acetylmuramoyl-pentapeptide-transferase activity"/>
    <property type="evidence" value="ECO:0007669"/>
    <property type="project" value="UniProtKB-UniRule"/>
</dbReference>
<dbReference type="GO" id="GO:0051992">
    <property type="term" value="F:UDP-N-acetylmuramoyl-L-alanyl-D-glutamyl-meso-2,6-diaminopimelyl-D-alanyl-D-alanine:undecaprenyl-phosphate transferase activity"/>
    <property type="evidence" value="ECO:0007669"/>
    <property type="project" value="RHEA"/>
</dbReference>
<dbReference type="GO" id="GO:0051301">
    <property type="term" value="P:cell division"/>
    <property type="evidence" value="ECO:0007669"/>
    <property type="project" value="UniProtKB-KW"/>
</dbReference>
<dbReference type="GO" id="GO:0071555">
    <property type="term" value="P:cell wall organization"/>
    <property type="evidence" value="ECO:0007669"/>
    <property type="project" value="UniProtKB-KW"/>
</dbReference>
<dbReference type="GO" id="GO:0009252">
    <property type="term" value="P:peptidoglycan biosynthetic process"/>
    <property type="evidence" value="ECO:0007669"/>
    <property type="project" value="UniProtKB-UniRule"/>
</dbReference>
<dbReference type="GO" id="GO:0008360">
    <property type="term" value="P:regulation of cell shape"/>
    <property type="evidence" value="ECO:0007669"/>
    <property type="project" value="UniProtKB-KW"/>
</dbReference>
<dbReference type="CDD" id="cd06852">
    <property type="entry name" value="GT_MraY"/>
    <property type="match status" value="1"/>
</dbReference>
<dbReference type="HAMAP" id="MF_00038">
    <property type="entry name" value="MraY"/>
    <property type="match status" value="1"/>
</dbReference>
<dbReference type="InterPro" id="IPR000715">
    <property type="entry name" value="Glycosyl_transferase_4"/>
</dbReference>
<dbReference type="InterPro" id="IPR003524">
    <property type="entry name" value="PNAcMuramoyl-5peptid_Trfase"/>
</dbReference>
<dbReference type="InterPro" id="IPR018480">
    <property type="entry name" value="PNAcMuramoyl-5peptid_Trfase_CS"/>
</dbReference>
<dbReference type="NCBIfam" id="TIGR00445">
    <property type="entry name" value="mraY"/>
    <property type="match status" value="1"/>
</dbReference>
<dbReference type="PANTHER" id="PTHR22926">
    <property type="entry name" value="PHOSPHO-N-ACETYLMURAMOYL-PENTAPEPTIDE-TRANSFERASE"/>
    <property type="match status" value="1"/>
</dbReference>
<dbReference type="PANTHER" id="PTHR22926:SF5">
    <property type="entry name" value="PHOSPHO-N-ACETYLMURAMOYL-PENTAPEPTIDE-TRANSFERASE HOMOLOG"/>
    <property type="match status" value="1"/>
</dbReference>
<dbReference type="Pfam" id="PF00953">
    <property type="entry name" value="Glycos_transf_4"/>
    <property type="match status" value="1"/>
</dbReference>
<dbReference type="Pfam" id="PF10555">
    <property type="entry name" value="MraY_sig1"/>
    <property type="match status" value="1"/>
</dbReference>
<dbReference type="PROSITE" id="PS01347">
    <property type="entry name" value="MRAY_1"/>
    <property type="match status" value="1"/>
</dbReference>
<dbReference type="PROSITE" id="PS01348">
    <property type="entry name" value="MRAY_2"/>
    <property type="match status" value="1"/>
</dbReference>
<comment type="function">
    <text evidence="1">Catalyzes the initial step of the lipid cycle reactions in the biosynthesis of the cell wall peptidoglycan: transfers peptidoglycan precursor phospho-MurNAc-pentapeptide from UDP-MurNAc-pentapeptide onto the lipid carrier undecaprenyl phosphate, yielding undecaprenyl-pyrophosphoryl-MurNAc-pentapeptide, known as lipid I.</text>
</comment>
<comment type="catalytic activity">
    <reaction evidence="1">
        <text>UDP-N-acetyl-alpha-D-muramoyl-L-alanyl-gamma-D-glutamyl-meso-2,6-diaminopimeloyl-D-alanyl-D-alanine + di-trans,octa-cis-undecaprenyl phosphate = di-trans,octa-cis-undecaprenyl diphospho-N-acetyl-alpha-D-muramoyl-L-alanyl-D-glutamyl-meso-2,6-diaminopimeloyl-D-alanyl-D-alanine + UMP</text>
        <dbReference type="Rhea" id="RHEA:28386"/>
        <dbReference type="ChEBI" id="CHEBI:57865"/>
        <dbReference type="ChEBI" id="CHEBI:60392"/>
        <dbReference type="ChEBI" id="CHEBI:61386"/>
        <dbReference type="ChEBI" id="CHEBI:61387"/>
        <dbReference type="EC" id="2.7.8.13"/>
    </reaction>
</comment>
<comment type="cofactor">
    <cofactor evidence="1">
        <name>Mg(2+)</name>
        <dbReference type="ChEBI" id="CHEBI:18420"/>
    </cofactor>
</comment>
<comment type="pathway">
    <text evidence="1">Cell wall biogenesis; peptidoglycan biosynthesis.</text>
</comment>
<comment type="subcellular location">
    <subcellularLocation>
        <location evidence="1">Cell inner membrane</location>
        <topology evidence="1">Multi-pass membrane protein</topology>
    </subcellularLocation>
</comment>
<comment type="similarity">
    <text evidence="1">Belongs to the glycosyltransferase 4 family. MraY subfamily.</text>
</comment>
<organism>
    <name type="scientific">Cupriavidus metallidurans (strain ATCC 43123 / DSM 2839 / NBRC 102507 / CH34)</name>
    <name type="common">Ralstonia metallidurans</name>
    <dbReference type="NCBI Taxonomy" id="266264"/>
    <lineage>
        <taxon>Bacteria</taxon>
        <taxon>Pseudomonadati</taxon>
        <taxon>Pseudomonadota</taxon>
        <taxon>Betaproteobacteria</taxon>
        <taxon>Burkholderiales</taxon>
        <taxon>Burkholderiaceae</taxon>
        <taxon>Cupriavidus</taxon>
    </lineage>
</organism>
<evidence type="ECO:0000255" key="1">
    <source>
        <dbReference type="HAMAP-Rule" id="MF_00038"/>
    </source>
</evidence>
<proteinExistence type="inferred from homology"/>
<keyword id="KW-0131">Cell cycle</keyword>
<keyword id="KW-0132">Cell division</keyword>
<keyword id="KW-0997">Cell inner membrane</keyword>
<keyword id="KW-1003">Cell membrane</keyword>
<keyword id="KW-0133">Cell shape</keyword>
<keyword id="KW-0961">Cell wall biogenesis/degradation</keyword>
<keyword id="KW-0460">Magnesium</keyword>
<keyword id="KW-0472">Membrane</keyword>
<keyword id="KW-0479">Metal-binding</keyword>
<keyword id="KW-0573">Peptidoglycan synthesis</keyword>
<keyword id="KW-1185">Reference proteome</keyword>
<keyword id="KW-0808">Transferase</keyword>
<keyword id="KW-0812">Transmembrane</keyword>
<keyword id="KW-1133">Transmembrane helix</keyword>
<protein>
    <recommendedName>
        <fullName evidence="1">Phospho-N-acetylmuramoyl-pentapeptide-transferase</fullName>
        <ecNumber evidence="1">2.7.8.13</ecNumber>
    </recommendedName>
    <alternativeName>
        <fullName evidence="1">UDP-MurNAc-pentapeptide phosphotransferase</fullName>
    </alternativeName>
</protein>
<feature type="chain" id="PRO_1000003036" description="Phospho-N-acetylmuramoyl-pentapeptide-transferase">
    <location>
        <begin position="1"/>
        <end position="389"/>
    </location>
</feature>
<feature type="transmembrane region" description="Helical" evidence="1">
    <location>
        <begin position="25"/>
        <end position="45"/>
    </location>
</feature>
<feature type="transmembrane region" description="Helical" evidence="1">
    <location>
        <begin position="74"/>
        <end position="94"/>
    </location>
</feature>
<feature type="transmembrane region" description="Helical" evidence="1">
    <location>
        <begin position="97"/>
        <end position="117"/>
    </location>
</feature>
<feature type="transmembrane region" description="Helical" evidence="1">
    <location>
        <begin position="134"/>
        <end position="154"/>
    </location>
</feature>
<feature type="transmembrane region" description="Helical" evidence="1">
    <location>
        <begin position="167"/>
        <end position="187"/>
    </location>
</feature>
<feature type="transmembrane region" description="Helical" evidence="1">
    <location>
        <begin position="190"/>
        <end position="210"/>
    </location>
</feature>
<feature type="transmembrane region" description="Helical" evidence="1">
    <location>
        <begin position="222"/>
        <end position="242"/>
    </location>
</feature>
<feature type="transmembrane region" description="Helical" evidence="1">
    <location>
        <begin position="259"/>
        <end position="279"/>
    </location>
</feature>
<feature type="transmembrane region" description="Helical" evidence="1">
    <location>
        <begin position="286"/>
        <end position="306"/>
    </location>
</feature>
<feature type="transmembrane region" description="Helical" evidence="1">
    <location>
        <begin position="311"/>
        <end position="331"/>
    </location>
</feature>
<feature type="transmembrane region" description="Helical" evidence="1">
    <location>
        <begin position="366"/>
        <end position="386"/>
    </location>
</feature>
<sequence>MLLTLAQWLQNDYSFLRVVNYLTFRAVMANVTALVIGLGFGPWVIRRLTELKIGQAVRTIGPQTHLVKAGTPTMGGVLVLISIAISTLLWCDWGNRFIWVVLLVTLGYGAIGWVDDYRKVVYRDPRGMSSREKFFWQTLIGLVAAVYLAFSVSEASNVRIWSLFLSWIEGGMFADVPYKMNLIVPFFKEVSYPLGVTGFIVLTYLVIVGSSNAVNLTDGLDGLVIMPVVLVGGGLGVFAYVMGNAVYSKYLLFPHIPGAGELLIFCSAMAGAGLAFLWFNAHPARVFMGDVGALALGGALGTVAVIVRQEIVLFVMGGIFVVETLSVMLQVSWFKFTKRRYGEGRRLFRMAPLHHHFELGGWKETQVTVRFWIITMLLVLIGLSSLKLR</sequence>
<name>MRAY_CUPMC</name>
<reference key="1">
    <citation type="journal article" date="2010" name="PLoS ONE">
        <title>The complete genome sequence of Cupriavidus metallidurans strain CH34, a master survivalist in harsh and anthropogenic environments.</title>
        <authorList>
            <person name="Janssen P.J."/>
            <person name="Van Houdt R."/>
            <person name="Moors H."/>
            <person name="Monsieurs P."/>
            <person name="Morin N."/>
            <person name="Michaux A."/>
            <person name="Benotmane M.A."/>
            <person name="Leys N."/>
            <person name="Vallaeys T."/>
            <person name="Lapidus A."/>
            <person name="Monchy S."/>
            <person name="Medigue C."/>
            <person name="Taghavi S."/>
            <person name="McCorkle S."/>
            <person name="Dunn J."/>
            <person name="van der Lelie D."/>
            <person name="Mergeay M."/>
        </authorList>
    </citation>
    <scope>NUCLEOTIDE SEQUENCE [LARGE SCALE GENOMIC DNA]</scope>
    <source>
        <strain>ATCC 43123 / DSM 2839 / NBRC 102507 / CH34</strain>
    </source>
</reference>
<accession>Q1LIM3</accession>